<feature type="chain" id="PRO_0000180370" description="Ribonuclease 3 1">
    <location>
        <begin position="1"/>
        <end position="228"/>
    </location>
</feature>
<feature type="domain" description="RNase III" evidence="1">
    <location>
        <begin position="1"/>
        <end position="124"/>
    </location>
</feature>
<feature type="domain" description="DRBM" evidence="1">
    <location>
        <begin position="153"/>
        <end position="223"/>
    </location>
</feature>
<feature type="active site" evidence="1">
    <location>
        <position position="41"/>
    </location>
</feature>
<feature type="active site" evidence="1">
    <location>
        <position position="113"/>
    </location>
</feature>
<feature type="binding site" evidence="1">
    <location>
        <position position="37"/>
    </location>
    <ligand>
        <name>Mg(2+)</name>
        <dbReference type="ChEBI" id="CHEBI:18420"/>
    </ligand>
</feature>
<feature type="binding site" evidence="1">
    <location>
        <position position="110"/>
    </location>
    <ligand>
        <name>Mg(2+)</name>
        <dbReference type="ChEBI" id="CHEBI:18420"/>
    </ligand>
</feature>
<feature type="binding site" evidence="1">
    <location>
        <position position="113"/>
    </location>
    <ligand>
        <name>Mg(2+)</name>
        <dbReference type="ChEBI" id="CHEBI:18420"/>
    </ligand>
</feature>
<organism>
    <name type="scientific">Nostoc sp. (strain PCC 7120 / SAG 25.82 / UTEX 2576)</name>
    <dbReference type="NCBI Taxonomy" id="103690"/>
    <lineage>
        <taxon>Bacteria</taxon>
        <taxon>Bacillati</taxon>
        <taxon>Cyanobacteriota</taxon>
        <taxon>Cyanophyceae</taxon>
        <taxon>Nostocales</taxon>
        <taxon>Nostocaceae</taxon>
        <taxon>Nostoc</taxon>
    </lineage>
</organism>
<protein>
    <recommendedName>
        <fullName evidence="1">Ribonuclease 3 1</fullName>
        <ecNumber evidence="1">3.1.26.3</ecNumber>
    </recommendedName>
    <alternativeName>
        <fullName evidence="1">Ribonuclease III 1</fullName>
        <shortName evidence="1">RNase III 1</shortName>
    </alternativeName>
</protein>
<evidence type="ECO:0000255" key="1">
    <source>
        <dbReference type="HAMAP-Rule" id="MF_00104"/>
    </source>
</evidence>
<accession>Q8Z023</accession>
<reference key="1">
    <citation type="journal article" date="2001" name="DNA Res.">
        <title>Complete genomic sequence of the filamentous nitrogen-fixing cyanobacterium Anabaena sp. strain PCC 7120.</title>
        <authorList>
            <person name="Kaneko T."/>
            <person name="Nakamura Y."/>
            <person name="Wolk C.P."/>
            <person name="Kuritz T."/>
            <person name="Sasamoto S."/>
            <person name="Watanabe A."/>
            <person name="Iriguchi M."/>
            <person name="Ishikawa A."/>
            <person name="Kawashima K."/>
            <person name="Kimura T."/>
            <person name="Kishida Y."/>
            <person name="Kohara M."/>
            <person name="Matsumoto M."/>
            <person name="Matsuno A."/>
            <person name="Muraki A."/>
            <person name="Nakazaki N."/>
            <person name="Shimpo S."/>
            <person name="Sugimoto M."/>
            <person name="Takazawa M."/>
            <person name="Yamada M."/>
            <person name="Yasuda M."/>
            <person name="Tabata S."/>
        </authorList>
    </citation>
    <scope>NUCLEOTIDE SEQUENCE [LARGE SCALE GENOMIC DNA]</scope>
    <source>
        <strain>PCC 7120 / SAG 25.82 / UTEX 2576</strain>
    </source>
</reference>
<gene>
    <name evidence="1" type="primary">rnc1</name>
    <name type="ordered locus">alr0280</name>
</gene>
<sequence length="228" mass="25872">MYKLLMFRDDKLLRRALTHRSYVNENPEEGEHNERLEFLGDAILNFLSGEYLYRSHPDRGEDELTRRRSALVDEKQLAKFAIEVGLDFKMRLGKGAIRDGGYQNPNLLSSTFEAVIGAYYLDNNSNIEAVRAIIEPLFESVPEQIVVVRSNVDSKNRFQEWVQRNIGPTPPKYLTEQIGGFSHAPEFKATVLVGEKEYGEGIGKNKKDAEKAAAENALANLNKQELLP</sequence>
<proteinExistence type="inferred from homology"/>
<keyword id="KW-0963">Cytoplasm</keyword>
<keyword id="KW-0255">Endonuclease</keyword>
<keyword id="KW-0378">Hydrolase</keyword>
<keyword id="KW-0460">Magnesium</keyword>
<keyword id="KW-0479">Metal-binding</keyword>
<keyword id="KW-0507">mRNA processing</keyword>
<keyword id="KW-0540">Nuclease</keyword>
<keyword id="KW-1185">Reference proteome</keyword>
<keyword id="KW-0694">RNA-binding</keyword>
<keyword id="KW-0698">rRNA processing</keyword>
<keyword id="KW-0699">rRNA-binding</keyword>
<keyword id="KW-0819">tRNA processing</keyword>
<name>RNC1_NOSS1</name>
<comment type="function">
    <text evidence="1">Digests double-stranded RNA. Involved in the processing of primary rRNA transcript to yield the immediate precursors to the large and small rRNAs (23S and 16S). Processes some mRNAs, and tRNAs when they are encoded in the rRNA operon. Processes pre-crRNA and tracrRNA of type II CRISPR loci if present in the organism.</text>
</comment>
<comment type="catalytic activity">
    <reaction evidence="1">
        <text>Endonucleolytic cleavage to 5'-phosphomonoester.</text>
        <dbReference type="EC" id="3.1.26.3"/>
    </reaction>
</comment>
<comment type="cofactor">
    <cofactor evidence="1">
        <name>Mg(2+)</name>
        <dbReference type="ChEBI" id="CHEBI:18420"/>
    </cofactor>
</comment>
<comment type="subunit">
    <text evidence="1">Homodimer.</text>
</comment>
<comment type="subcellular location">
    <subcellularLocation>
        <location evidence="1">Cytoplasm</location>
    </subcellularLocation>
</comment>
<comment type="similarity">
    <text evidence="1">Belongs to the ribonuclease III family.</text>
</comment>
<dbReference type="EC" id="3.1.26.3" evidence="1"/>
<dbReference type="EMBL" id="BA000019">
    <property type="protein sequence ID" value="BAB77804.1"/>
    <property type="molecule type" value="Genomic_DNA"/>
</dbReference>
<dbReference type="PIR" id="AH1841">
    <property type="entry name" value="AH1841"/>
</dbReference>
<dbReference type="SMR" id="Q8Z023"/>
<dbReference type="STRING" id="103690.gene:10492288"/>
<dbReference type="KEGG" id="ana:alr0280"/>
<dbReference type="eggNOG" id="COG0571">
    <property type="taxonomic scope" value="Bacteria"/>
</dbReference>
<dbReference type="OrthoDB" id="9805026at2"/>
<dbReference type="Proteomes" id="UP000002483">
    <property type="component" value="Chromosome"/>
</dbReference>
<dbReference type="GO" id="GO:0005737">
    <property type="term" value="C:cytoplasm"/>
    <property type="evidence" value="ECO:0007669"/>
    <property type="project" value="UniProtKB-SubCell"/>
</dbReference>
<dbReference type="GO" id="GO:0003725">
    <property type="term" value="F:double-stranded RNA binding"/>
    <property type="evidence" value="ECO:0007669"/>
    <property type="project" value="TreeGrafter"/>
</dbReference>
<dbReference type="GO" id="GO:0046872">
    <property type="term" value="F:metal ion binding"/>
    <property type="evidence" value="ECO:0007669"/>
    <property type="project" value="UniProtKB-KW"/>
</dbReference>
<dbReference type="GO" id="GO:0004525">
    <property type="term" value="F:ribonuclease III activity"/>
    <property type="evidence" value="ECO:0007669"/>
    <property type="project" value="UniProtKB-UniRule"/>
</dbReference>
<dbReference type="GO" id="GO:0019843">
    <property type="term" value="F:rRNA binding"/>
    <property type="evidence" value="ECO:0007669"/>
    <property type="project" value="UniProtKB-KW"/>
</dbReference>
<dbReference type="GO" id="GO:0006397">
    <property type="term" value="P:mRNA processing"/>
    <property type="evidence" value="ECO:0007669"/>
    <property type="project" value="UniProtKB-UniRule"/>
</dbReference>
<dbReference type="GO" id="GO:0010468">
    <property type="term" value="P:regulation of gene expression"/>
    <property type="evidence" value="ECO:0007669"/>
    <property type="project" value="TreeGrafter"/>
</dbReference>
<dbReference type="GO" id="GO:0006364">
    <property type="term" value="P:rRNA processing"/>
    <property type="evidence" value="ECO:0007669"/>
    <property type="project" value="UniProtKB-UniRule"/>
</dbReference>
<dbReference type="GO" id="GO:0008033">
    <property type="term" value="P:tRNA processing"/>
    <property type="evidence" value="ECO:0007669"/>
    <property type="project" value="UniProtKB-KW"/>
</dbReference>
<dbReference type="CDD" id="cd10845">
    <property type="entry name" value="DSRM_RNAse_III_family"/>
    <property type="match status" value="1"/>
</dbReference>
<dbReference type="CDD" id="cd00593">
    <property type="entry name" value="RIBOc"/>
    <property type="match status" value="1"/>
</dbReference>
<dbReference type="FunFam" id="1.10.1520.10:FF:000001">
    <property type="entry name" value="Ribonuclease 3"/>
    <property type="match status" value="1"/>
</dbReference>
<dbReference type="Gene3D" id="3.30.160.20">
    <property type="match status" value="1"/>
</dbReference>
<dbReference type="Gene3D" id="1.10.1520.10">
    <property type="entry name" value="Ribonuclease III domain"/>
    <property type="match status" value="1"/>
</dbReference>
<dbReference type="HAMAP" id="MF_00104">
    <property type="entry name" value="RNase_III"/>
    <property type="match status" value="1"/>
</dbReference>
<dbReference type="InterPro" id="IPR014720">
    <property type="entry name" value="dsRBD_dom"/>
</dbReference>
<dbReference type="InterPro" id="IPR011907">
    <property type="entry name" value="RNase_III"/>
</dbReference>
<dbReference type="InterPro" id="IPR000999">
    <property type="entry name" value="RNase_III_dom"/>
</dbReference>
<dbReference type="InterPro" id="IPR036389">
    <property type="entry name" value="RNase_III_sf"/>
</dbReference>
<dbReference type="NCBIfam" id="TIGR02191">
    <property type="entry name" value="RNaseIII"/>
    <property type="match status" value="1"/>
</dbReference>
<dbReference type="PANTHER" id="PTHR11207:SF0">
    <property type="entry name" value="RIBONUCLEASE 3"/>
    <property type="match status" value="1"/>
</dbReference>
<dbReference type="PANTHER" id="PTHR11207">
    <property type="entry name" value="RIBONUCLEASE III"/>
    <property type="match status" value="1"/>
</dbReference>
<dbReference type="Pfam" id="PF00035">
    <property type="entry name" value="dsrm"/>
    <property type="match status" value="1"/>
</dbReference>
<dbReference type="Pfam" id="PF14622">
    <property type="entry name" value="Ribonucleas_3_3"/>
    <property type="match status" value="1"/>
</dbReference>
<dbReference type="SMART" id="SM00358">
    <property type="entry name" value="DSRM"/>
    <property type="match status" value="1"/>
</dbReference>
<dbReference type="SMART" id="SM00535">
    <property type="entry name" value="RIBOc"/>
    <property type="match status" value="1"/>
</dbReference>
<dbReference type="SUPFAM" id="SSF54768">
    <property type="entry name" value="dsRNA-binding domain-like"/>
    <property type="match status" value="1"/>
</dbReference>
<dbReference type="SUPFAM" id="SSF69065">
    <property type="entry name" value="RNase III domain-like"/>
    <property type="match status" value="1"/>
</dbReference>
<dbReference type="PROSITE" id="PS50137">
    <property type="entry name" value="DS_RBD"/>
    <property type="match status" value="1"/>
</dbReference>
<dbReference type="PROSITE" id="PS00517">
    <property type="entry name" value="RNASE_3_1"/>
    <property type="match status" value="1"/>
</dbReference>
<dbReference type="PROSITE" id="PS50142">
    <property type="entry name" value="RNASE_3_2"/>
    <property type="match status" value="1"/>
</dbReference>